<sequence length="441" mass="48703">MSETIAALATAYGIGSVSIVRLSGKDALATSLKLLKLSNLEPRYAKLAKIYSIDDEILDEGIVIYFKAPASFTGEDIVEFQTHGGVMVSERILNELIRAGARLAMPGEFSKRAFLNGKMDLAKAEAMQGLITSKSEIAAKILTRQMQGDLSKFVGEIRGEVVKTLAFVETMIDYADDDLPANLLEQTKLMLLKNSEKLERIATLSEQRRGLIDGFKIAIVGKPNVGKSSILNSFLAYERAIVSDEAGTTRDRIEENFKIGSHLVRIIDTAGIRKDAGKIEQIGINYSISAINEADIILAVFDGSCPSDEQDKEIIRLISNSNKKAFFILNKSDLAFKFDIELDGAIKISAKNDSSVVLKELEGYLKTQDTDEIMLSSNRQILSCKEASEALKRAFLRLNEEELEIFAYELNSAIKALASITKPFERSEILDEMFSHFCLGK</sequence>
<proteinExistence type="inferred from homology"/>
<evidence type="ECO:0000255" key="1">
    <source>
        <dbReference type="HAMAP-Rule" id="MF_00379"/>
    </source>
</evidence>
<organism>
    <name type="scientific">Campylobacter concisus (strain 13826)</name>
    <dbReference type="NCBI Taxonomy" id="360104"/>
    <lineage>
        <taxon>Bacteria</taxon>
        <taxon>Pseudomonadati</taxon>
        <taxon>Campylobacterota</taxon>
        <taxon>Epsilonproteobacteria</taxon>
        <taxon>Campylobacterales</taxon>
        <taxon>Campylobacteraceae</taxon>
        <taxon>Campylobacter</taxon>
    </lineage>
</organism>
<gene>
    <name evidence="1" type="primary">mnmE</name>
    <name evidence="1" type="synonym">trmE</name>
    <name type="ordered locus">Ccon26_07740</name>
    <name type="ORF">CCC13826_1625</name>
</gene>
<protein>
    <recommendedName>
        <fullName evidence="1">tRNA modification GTPase MnmE</fullName>
        <ecNumber evidence="1">3.6.-.-</ecNumber>
    </recommendedName>
</protein>
<keyword id="KW-0963">Cytoplasm</keyword>
<keyword id="KW-0342">GTP-binding</keyword>
<keyword id="KW-0378">Hydrolase</keyword>
<keyword id="KW-0460">Magnesium</keyword>
<keyword id="KW-0479">Metal-binding</keyword>
<keyword id="KW-0547">Nucleotide-binding</keyword>
<keyword id="KW-0630">Potassium</keyword>
<keyword id="KW-0819">tRNA processing</keyword>
<comment type="function">
    <text evidence="1">Exhibits a very high intrinsic GTPase hydrolysis rate. Involved in the addition of a carboxymethylaminomethyl (cmnm) group at the wobble position (U34) of certain tRNAs, forming tRNA-cmnm(5)s(2)U34.</text>
</comment>
<comment type="cofactor">
    <cofactor evidence="1">
        <name>K(+)</name>
        <dbReference type="ChEBI" id="CHEBI:29103"/>
    </cofactor>
    <text evidence="1">Binds 1 potassium ion per subunit.</text>
</comment>
<comment type="subunit">
    <text evidence="1">Homodimer. Heterotetramer of two MnmE and two MnmG subunits.</text>
</comment>
<comment type="subcellular location">
    <subcellularLocation>
        <location evidence="1">Cytoplasm</location>
    </subcellularLocation>
</comment>
<comment type="similarity">
    <text evidence="1">Belongs to the TRAFAC class TrmE-Era-EngA-EngB-Septin-like GTPase superfamily. TrmE GTPase family.</text>
</comment>
<accession>A7ZCZ1</accession>
<feature type="chain" id="PRO_0000345752" description="tRNA modification GTPase MnmE">
    <location>
        <begin position="1"/>
        <end position="441"/>
    </location>
</feature>
<feature type="domain" description="TrmE-type G">
    <location>
        <begin position="214"/>
        <end position="370"/>
    </location>
</feature>
<feature type="binding site" evidence="1">
    <location>
        <position position="21"/>
    </location>
    <ligand>
        <name>(6S)-5-formyl-5,6,7,8-tetrahydrofolate</name>
        <dbReference type="ChEBI" id="CHEBI:57457"/>
    </ligand>
</feature>
<feature type="binding site" evidence="1">
    <location>
        <position position="79"/>
    </location>
    <ligand>
        <name>(6S)-5-formyl-5,6,7,8-tetrahydrofolate</name>
        <dbReference type="ChEBI" id="CHEBI:57457"/>
    </ligand>
</feature>
<feature type="binding site" evidence="1">
    <location>
        <position position="118"/>
    </location>
    <ligand>
        <name>(6S)-5-formyl-5,6,7,8-tetrahydrofolate</name>
        <dbReference type="ChEBI" id="CHEBI:57457"/>
    </ligand>
</feature>
<feature type="binding site" evidence="1">
    <location>
        <begin position="224"/>
        <end position="229"/>
    </location>
    <ligand>
        <name>GTP</name>
        <dbReference type="ChEBI" id="CHEBI:37565"/>
    </ligand>
</feature>
<feature type="binding site" evidence="1">
    <location>
        <position position="228"/>
    </location>
    <ligand>
        <name>Mg(2+)</name>
        <dbReference type="ChEBI" id="CHEBI:18420"/>
    </ligand>
</feature>
<feature type="binding site" evidence="1">
    <location>
        <begin position="243"/>
        <end position="249"/>
    </location>
    <ligand>
        <name>GTP</name>
        <dbReference type="ChEBI" id="CHEBI:37565"/>
    </ligand>
</feature>
<feature type="binding site" evidence="1">
    <location>
        <position position="249"/>
    </location>
    <ligand>
        <name>Mg(2+)</name>
        <dbReference type="ChEBI" id="CHEBI:18420"/>
    </ligand>
</feature>
<feature type="binding site" evidence="1">
    <location>
        <begin position="268"/>
        <end position="271"/>
    </location>
    <ligand>
        <name>GTP</name>
        <dbReference type="ChEBI" id="CHEBI:37565"/>
    </ligand>
</feature>
<feature type="binding site" evidence="1">
    <location>
        <position position="441"/>
    </location>
    <ligand>
        <name>(6S)-5-formyl-5,6,7,8-tetrahydrofolate</name>
        <dbReference type="ChEBI" id="CHEBI:57457"/>
    </ligand>
</feature>
<name>MNME_CAMC1</name>
<dbReference type="EC" id="3.6.-.-" evidence="1"/>
<dbReference type="EMBL" id="CP000792">
    <property type="protein sequence ID" value="EAT97411.1"/>
    <property type="molecule type" value="Genomic_DNA"/>
</dbReference>
<dbReference type="RefSeq" id="WP_012001600.1">
    <property type="nucleotide sequence ID" value="NC_009802.2"/>
</dbReference>
<dbReference type="SMR" id="A7ZCZ1"/>
<dbReference type="STRING" id="360104.CCC13826_1625"/>
<dbReference type="KEGG" id="cco:CCC13826_1625"/>
<dbReference type="eggNOG" id="COG0486">
    <property type="taxonomic scope" value="Bacteria"/>
</dbReference>
<dbReference type="HOGENOM" id="CLU_019624_4_1_7"/>
<dbReference type="OrthoDB" id="9805918at2"/>
<dbReference type="Proteomes" id="UP000001121">
    <property type="component" value="Chromosome"/>
</dbReference>
<dbReference type="GO" id="GO:0005829">
    <property type="term" value="C:cytosol"/>
    <property type="evidence" value="ECO:0007669"/>
    <property type="project" value="TreeGrafter"/>
</dbReference>
<dbReference type="GO" id="GO:0005525">
    <property type="term" value="F:GTP binding"/>
    <property type="evidence" value="ECO:0007669"/>
    <property type="project" value="UniProtKB-UniRule"/>
</dbReference>
<dbReference type="GO" id="GO:0003924">
    <property type="term" value="F:GTPase activity"/>
    <property type="evidence" value="ECO:0007669"/>
    <property type="project" value="UniProtKB-UniRule"/>
</dbReference>
<dbReference type="GO" id="GO:0046872">
    <property type="term" value="F:metal ion binding"/>
    <property type="evidence" value="ECO:0007669"/>
    <property type="project" value="UniProtKB-KW"/>
</dbReference>
<dbReference type="GO" id="GO:0030488">
    <property type="term" value="P:tRNA methylation"/>
    <property type="evidence" value="ECO:0007669"/>
    <property type="project" value="TreeGrafter"/>
</dbReference>
<dbReference type="GO" id="GO:0002098">
    <property type="term" value="P:tRNA wobble uridine modification"/>
    <property type="evidence" value="ECO:0007669"/>
    <property type="project" value="TreeGrafter"/>
</dbReference>
<dbReference type="CDD" id="cd04164">
    <property type="entry name" value="trmE"/>
    <property type="match status" value="1"/>
</dbReference>
<dbReference type="CDD" id="cd14858">
    <property type="entry name" value="TrmE_N"/>
    <property type="match status" value="1"/>
</dbReference>
<dbReference type="Gene3D" id="3.40.50.300">
    <property type="entry name" value="P-loop containing nucleotide triphosphate hydrolases"/>
    <property type="match status" value="1"/>
</dbReference>
<dbReference type="Gene3D" id="3.30.1360.120">
    <property type="entry name" value="Probable tRNA modification gtpase trme, domain 1"/>
    <property type="match status" value="1"/>
</dbReference>
<dbReference type="Gene3D" id="1.20.120.430">
    <property type="entry name" value="tRNA modification GTPase MnmE domain 2"/>
    <property type="match status" value="1"/>
</dbReference>
<dbReference type="HAMAP" id="MF_00379">
    <property type="entry name" value="GTPase_MnmE"/>
    <property type="match status" value="1"/>
</dbReference>
<dbReference type="InterPro" id="IPR031168">
    <property type="entry name" value="G_TrmE"/>
</dbReference>
<dbReference type="InterPro" id="IPR006073">
    <property type="entry name" value="GTP-bd"/>
</dbReference>
<dbReference type="InterPro" id="IPR018948">
    <property type="entry name" value="GTP-bd_TrmE_N"/>
</dbReference>
<dbReference type="InterPro" id="IPR004520">
    <property type="entry name" value="GTPase_MnmE"/>
</dbReference>
<dbReference type="InterPro" id="IPR027368">
    <property type="entry name" value="MnmE_dom2"/>
</dbReference>
<dbReference type="InterPro" id="IPR025867">
    <property type="entry name" value="MnmE_helical"/>
</dbReference>
<dbReference type="InterPro" id="IPR027417">
    <property type="entry name" value="P-loop_NTPase"/>
</dbReference>
<dbReference type="InterPro" id="IPR005225">
    <property type="entry name" value="Small_GTP-bd"/>
</dbReference>
<dbReference type="InterPro" id="IPR027266">
    <property type="entry name" value="TrmE/GcvT_dom1"/>
</dbReference>
<dbReference type="NCBIfam" id="TIGR00450">
    <property type="entry name" value="mnmE_trmE_thdF"/>
    <property type="match status" value="1"/>
</dbReference>
<dbReference type="NCBIfam" id="TIGR00231">
    <property type="entry name" value="small_GTP"/>
    <property type="match status" value="1"/>
</dbReference>
<dbReference type="PANTHER" id="PTHR42714">
    <property type="entry name" value="TRNA MODIFICATION GTPASE GTPBP3"/>
    <property type="match status" value="1"/>
</dbReference>
<dbReference type="PANTHER" id="PTHR42714:SF2">
    <property type="entry name" value="TRNA MODIFICATION GTPASE GTPBP3, MITOCHONDRIAL"/>
    <property type="match status" value="1"/>
</dbReference>
<dbReference type="Pfam" id="PF01926">
    <property type="entry name" value="MMR_HSR1"/>
    <property type="match status" value="1"/>
</dbReference>
<dbReference type="Pfam" id="PF12631">
    <property type="entry name" value="MnmE_helical"/>
    <property type="match status" value="1"/>
</dbReference>
<dbReference type="Pfam" id="PF10396">
    <property type="entry name" value="TrmE_N"/>
    <property type="match status" value="1"/>
</dbReference>
<dbReference type="SUPFAM" id="SSF103025">
    <property type="entry name" value="Folate-binding domain"/>
    <property type="match status" value="1"/>
</dbReference>
<dbReference type="SUPFAM" id="SSF52540">
    <property type="entry name" value="P-loop containing nucleoside triphosphate hydrolases"/>
    <property type="match status" value="1"/>
</dbReference>
<dbReference type="PROSITE" id="PS51709">
    <property type="entry name" value="G_TRME"/>
    <property type="match status" value="1"/>
</dbReference>
<reference key="1">
    <citation type="submission" date="2007-10" db="EMBL/GenBank/DDBJ databases">
        <title>Genome sequence of Campylobacter concisus 13826 isolated from human feces.</title>
        <authorList>
            <person name="Fouts D.E."/>
            <person name="Mongodin E.F."/>
            <person name="Puiu D."/>
            <person name="Sebastian Y."/>
            <person name="Miller W.G."/>
            <person name="Mandrell R.E."/>
            <person name="On S."/>
            <person name="Nelson K.E."/>
        </authorList>
    </citation>
    <scope>NUCLEOTIDE SEQUENCE [LARGE SCALE GENOMIC DNA]</scope>
    <source>
        <strain>13826</strain>
    </source>
</reference>